<dbReference type="EMBL" id="CP001127">
    <property type="protein sequence ID" value="ACF89568.1"/>
    <property type="molecule type" value="Genomic_DNA"/>
</dbReference>
<dbReference type="RefSeq" id="WP_000819623.1">
    <property type="nucleotide sequence ID" value="NC_011094.1"/>
</dbReference>
<dbReference type="SMR" id="B4TN12"/>
<dbReference type="KEGG" id="sew:SeSA_A4056"/>
<dbReference type="HOGENOM" id="CLU_001265_47_1_6"/>
<dbReference type="Proteomes" id="UP000001865">
    <property type="component" value="Chromosome"/>
</dbReference>
<dbReference type="GO" id="GO:0005886">
    <property type="term" value="C:plasma membrane"/>
    <property type="evidence" value="ECO:0007669"/>
    <property type="project" value="UniProtKB-SubCell"/>
</dbReference>
<dbReference type="GO" id="GO:0022857">
    <property type="term" value="F:transmembrane transporter activity"/>
    <property type="evidence" value="ECO:0007669"/>
    <property type="project" value="UniProtKB-UniRule"/>
</dbReference>
<dbReference type="CDD" id="cd17320">
    <property type="entry name" value="MFS_MdfA_MDR_like"/>
    <property type="match status" value="1"/>
</dbReference>
<dbReference type="FunFam" id="1.20.1720.10:FF:000003">
    <property type="entry name" value="Multidrug resistance protein MdtL"/>
    <property type="match status" value="1"/>
</dbReference>
<dbReference type="Gene3D" id="1.20.1720.10">
    <property type="entry name" value="Multidrug resistance protein D"/>
    <property type="match status" value="1"/>
</dbReference>
<dbReference type="HAMAP" id="MF_01530">
    <property type="entry name" value="MFS_MdtL"/>
    <property type="match status" value="1"/>
</dbReference>
<dbReference type="InterPro" id="IPR011701">
    <property type="entry name" value="MFS"/>
</dbReference>
<dbReference type="InterPro" id="IPR020846">
    <property type="entry name" value="MFS_dom"/>
</dbReference>
<dbReference type="InterPro" id="IPR036259">
    <property type="entry name" value="MFS_trans_sf"/>
</dbReference>
<dbReference type="InterPro" id="IPR023697">
    <property type="entry name" value="Multidrug-R_MdtL"/>
</dbReference>
<dbReference type="NCBIfam" id="NF007782">
    <property type="entry name" value="PRK10473.1"/>
    <property type="match status" value="1"/>
</dbReference>
<dbReference type="PANTHER" id="PTHR42718">
    <property type="entry name" value="MAJOR FACILITATOR SUPERFAMILY MULTIDRUG TRANSPORTER MFSC"/>
    <property type="match status" value="1"/>
</dbReference>
<dbReference type="PANTHER" id="PTHR42718:SF9">
    <property type="entry name" value="MAJOR FACILITATOR SUPERFAMILY MULTIDRUG TRANSPORTER MFSC"/>
    <property type="match status" value="1"/>
</dbReference>
<dbReference type="Pfam" id="PF07690">
    <property type="entry name" value="MFS_1"/>
    <property type="match status" value="1"/>
</dbReference>
<dbReference type="SUPFAM" id="SSF103473">
    <property type="entry name" value="MFS general substrate transporter"/>
    <property type="match status" value="1"/>
</dbReference>
<dbReference type="PROSITE" id="PS50850">
    <property type="entry name" value="MFS"/>
    <property type="match status" value="1"/>
</dbReference>
<keyword id="KW-0997">Cell inner membrane</keyword>
<keyword id="KW-1003">Cell membrane</keyword>
<keyword id="KW-0472">Membrane</keyword>
<keyword id="KW-0812">Transmembrane</keyword>
<keyword id="KW-1133">Transmembrane helix</keyword>
<keyword id="KW-0813">Transport</keyword>
<organism>
    <name type="scientific">Salmonella schwarzengrund (strain CVM19633)</name>
    <dbReference type="NCBI Taxonomy" id="439843"/>
    <lineage>
        <taxon>Bacteria</taxon>
        <taxon>Pseudomonadati</taxon>
        <taxon>Pseudomonadota</taxon>
        <taxon>Gammaproteobacteria</taxon>
        <taxon>Enterobacterales</taxon>
        <taxon>Enterobacteriaceae</taxon>
        <taxon>Salmonella</taxon>
    </lineage>
</organism>
<name>MDTL_SALSV</name>
<proteinExistence type="inferred from homology"/>
<accession>B4TN12</accession>
<sequence>MKRFLLCSFALVLLYPAGIDMYLVGLPRIAADLNASEAQLHIAFSVYLAGMATAMLFAGKIADQSGRKPVAIVGALVFMTASLLCSRASEGSLFLSGRFLQGVGAGGCYVVAFAILRDTLDEHRRAKVLSLLNGITCIVPVLAPVMGHLIMLRFPWQSLFYTMSAMGIIVGLLSLFILRETRPARLAPRDLSRSSPAAESLVNRFFVSRLAITTLSVSVILTFVNASPVLLMEVMGFSRGDYAITMALTAGVSMVVSFSTPFALGLFKPRTLMLVSQGLFLTAGVTLSLAHTNTVTLFGLTLICAGFSVGFGVAMSQALGPFSLRAGVASSTLGIAQVCGSSLWIWLAAILGISAMNMLIGILIGCSIVSILLIFSVTPNRSVAEHEEIPYQSRS</sequence>
<evidence type="ECO:0000255" key="1">
    <source>
        <dbReference type="HAMAP-Rule" id="MF_01530"/>
    </source>
</evidence>
<feature type="chain" id="PRO_1000200832" description="Multidrug resistance protein MdtL">
    <location>
        <begin position="1"/>
        <end position="395"/>
    </location>
</feature>
<feature type="transmembrane region" description="Helical" evidence="1">
    <location>
        <begin position="4"/>
        <end position="24"/>
    </location>
</feature>
<feature type="transmembrane region" description="Helical" evidence="1">
    <location>
        <begin position="42"/>
        <end position="62"/>
    </location>
</feature>
<feature type="transmembrane region" description="Helical" evidence="1">
    <location>
        <begin position="69"/>
        <end position="89"/>
    </location>
</feature>
<feature type="transmembrane region" description="Helical" evidence="1">
    <location>
        <begin position="93"/>
        <end position="113"/>
    </location>
</feature>
<feature type="transmembrane region" description="Helical" evidence="1">
    <location>
        <begin position="131"/>
        <end position="151"/>
    </location>
</feature>
<feature type="transmembrane region" description="Helical" evidence="1">
    <location>
        <begin position="158"/>
        <end position="178"/>
    </location>
</feature>
<feature type="transmembrane region" description="Helical" evidence="1">
    <location>
        <begin position="217"/>
        <end position="237"/>
    </location>
</feature>
<feature type="transmembrane region" description="Helical" evidence="1">
    <location>
        <begin position="247"/>
        <end position="267"/>
    </location>
</feature>
<feature type="transmembrane region" description="Helical" evidence="1">
    <location>
        <begin position="271"/>
        <end position="291"/>
    </location>
</feature>
<feature type="transmembrane region" description="Helical" evidence="1">
    <location>
        <begin position="295"/>
        <end position="315"/>
    </location>
</feature>
<feature type="transmembrane region" description="Helical" evidence="1">
    <location>
        <begin position="328"/>
        <end position="350"/>
    </location>
</feature>
<feature type="transmembrane region" description="Helical" evidence="1">
    <location>
        <begin position="355"/>
        <end position="377"/>
    </location>
</feature>
<comment type="subcellular location">
    <subcellularLocation>
        <location evidence="1">Cell inner membrane</location>
        <topology evidence="1">Multi-pass membrane protein</topology>
    </subcellularLocation>
</comment>
<comment type="similarity">
    <text evidence="1">Belongs to the major facilitator superfamily. DHA1 family. MdtL (TC 2.A.1.2.22) subfamily.</text>
</comment>
<gene>
    <name evidence="1" type="primary">mdtL</name>
    <name type="ordered locus">SeSA_A4056</name>
</gene>
<protein>
    <recommendedName>
        <fullName evidence="1">Multidrug resistance protein MdtL</fullName>
    </recommendedName>
</protein>
<reference key="1">
    <citation type="journal article" date="2011" name="J. Bacteriol.">
        <title>Comparative genomics of 28 Salmonella enterica isolates: evidence for CRISPR-mediated adaptive sublineage evolution.</title>
        <authorList>
            <person name="Fricke W.F."/>
            <person name="Mammel M.K."/>
            <person name="McDermott P.F."/>
            <person name="Tartera C."/>
            <person name="White D.G."/>
            <person name="Leclerc J.E."/>
            <person name="Ravel J."/>
            <person name="Cebula T.A."/>
        </authorList>
    </citation>
    <scope>NUCLEOTIDE SEQUENCE [LARGE SCALE GENOMIC DNA]</scope>
    <source>
        <strain>CVM19633</strain>
    </source>
</reference>